<accession>O70141</accession>
<feature type="signal peptide" evidence="3">
    <location>
        <begin position="1"/>
        <end position="26"/>
    </location>
</feature>
<feature type="chain" id="PRO_0000032343" description="Semaphorin-6B">
    <location>
        <begin position="27"/>
        <end position="887"/>
    </location>
</feature>
<feature type="topological domain" description="Extracellular" evidence="3">
    <location>
        <begin position="27"/>
        <end position="605"/>
    </location>
</feature>
<feature type="transmembrane region" description="Helical" evidence="3">
    <location>
        <begin position="606"/>
        <end position="626"/>
    </location>
</feature>
<feature type="topological domain" description="Cytoplasmic" evidence="3">
    <location>
        <begin position="627"/>
        <end position="887"/>
    </location>
</feature>
<feature type="domain" description="Sema" evidence="4">
    <location>
        <begin position="32"/>
        <end position="525"/>
    </location>
</feature>
<feature type="region of interest" description="Disordered" evidence="5">
    <location>
        <begin position="656"/>
        <end position="675"/>
    </location>
</feature>
<feature type="region of interest" description="Disordered" evidence="5">
    <location>
        <begin position="697"/>
        <end position="717"/>
    </location>
</feature>
<feature type="region of interest" description="Disordered" evidence="5">
    <location>
        <begin position="759"/>
        <end position="887"/>
    </location>
</feature>
<feature type="compositionally biased region" description="Gly residues" evidence="5">
    <location>
        <begin position="662"/>
        <end position="674"/>
    </location>
</feature>
<feature type="compositionally biased region" description="Low complexity" evidence="5">
    <location>
        <begin position="707"/>
        <end position="717"/>
    </location>
</feature>
<feature type="modified residue" description="Omega-N-methylarginine" evidence="1">
    <location>
        <position position="667"/>
    </location>
</feature>
<feature type="glycosylation site" description="N-linked (GlcNAc...) asparagine" evidence="3">
    <location>
        <position position="75"/>
    </location>
</feature>
<feature type="glycosylation site" description="N-linked (GlcNAc...) asparagine" evidence="3">
    <location>
        <position position="156"/>
    </location>
</feature>
<feature type="glycosylation site" description="N-linked (GlcNAc...) asparagine" evidence="3">
    <location>
        <position position="168"/>
    </location>
</feature>
<feature type="glycosylation site" description="N-linked (GlcNAc...) asparagine" evidence="3">
    <location>
        <position position="292"/>
    </location>
</feature>
<feature type="glycosylation site" description="N-linked (GlcNAc...) asparagine" evidence="3">
    <location>
        <position position="387"/>
    </location>
</feature>
<feature type="glycosylation site" description="N-linked (GlcNAc...) asparagine" evidence="3">
    <location>
        <position position="442"/>
    </location>
</feature>
<feature type="glycosylation site" description="N-linked (GlcNAc...) asparagine" evidence="3">
    <location>
        <position position="463"/>
    </location>
</feature>
<feature type="disulfide bond" evidence="4">
    <location>
        <begin position="117"/>
        <end position="127"/>
    </location>
</feature>
<feature type="disulfide bond" evidence="4">
    <location>
        <begin position="145"/>
        <end position="154"/>
    </location>
</feature>
<feature type="disulfide bond" evidence="4">
    <location>
        <begin position="268"/>
        <end position="379"/>
    </location>
</feature>
<feature type="disulfide bond" evidence="4">
    <location>
        <begin position="293"/>
        <end position="338"/>
    </location>
</feature>
<feature type="disulfide bond" evidence="4">
    <location>
        <begin position="487"/>
        <end position="519"/>
    </location>
</feature>
<feature type="disulfide bond" evidence="4">
    <location>
        <begin position="528"/>
        <end position="546"/>
    </location>
</feature>
<feature type="disulfide bond" evidence="4">
    <location>
        <begin position="534"/>
        <end position="580"/>
    </location>
</feature>
<feature type="disulfide bond" evidence="4">
    <location>
        <begin position="538"/>
        <end position="554"/>
    </location>
</feature>
<dbReference type="EMBL" id="AB000776">
    <property type="protein sequence ID" value="BAA25687.1"/>
    <property type="molecule type" value="mRNA"/>
</dbReference>
<dbReference type="RefSeq" id="NP_445923.1">
    <property type="nucleotide sequence ID" value="NM_053471.4"/>
</dbReference>
<dbReference type="RefSeq" id="XP_006244411.1">
    <property type="nucleotide sequence ID" value="XM_006244349.5"/>
</dbReference>
<dbReference type="SMR" id="O70141"/>
<dbReference type="FunCoup" id="O70141">
    <property type="interactions" value="1080"/>
</dbReference>
<dbReference type="STRING" id="10116.ENSRNOP00000067668"/>
<dbReference type="GlyCosmos" id="O70141">
    <property type="glycosylation" value="7 sites, No reported glycans"/>
</dbReference>
<dbReference type="GlyGen" id="O70141">
    <property type="glycosylation" value="7 sites"/>
</dbReference>
<dbReference type="PhosphoSitePlus" id="O70141"/>
<dbReference type="PaxDb" id="10116-ENSRNOP00000067668"/>
<dbReference type="GeneID" id="84609"/>
<dbReference type="KEGG" id="rno:84609"/>
<dbReference type="AGR" id="RGD:69278"/>
<dbReference type="CTD" id="10501"/>
<dbReference type="RGD" id="69278">
    <property type="gene designation" value="Sema6b"/>
</dbReference>
<dbReference type="VEuPathDB" id="HostDB:ENSRNOG00000045998"/>
<dbReference type="eggNOG" id="KOG3611">
    <property type="taxonomic scope" value="Eukaryota"/>
</dbReference>
<dbReference type="HOGENOM" id="CLU_009051_2_1_1"/>
<dbReference type="InParanoid" id="O70141"/>
<dbReference type="OrthoDB" id="9988752at2759"/>
<dbReference type="PhylomeDB" id="O70141"/>
<dbReference type="PRO" id="PR:O70141"/>
<dbReference type="Proteomes" id="UP000002494">
    <property type="component" value="Chromosome 9"/>
</dbReference>
<dbReference type="Bgee" id="ENSRNOG00000045998">
    <property type="expression patterns" value="Expressed in frontal cortex and 19 other cell types or tissues"/>
</dbReference>
<dbReference type="GO" id="GO:0005886">
    <property type="term" value="C:plasma membrane"/>
    <property type="evidence" value="ECO:0000318"/>
    <property type="project" value="GO_Central"/>
</dbReference>
<dbReference type="GO" id="GO:0045499">
    <property type="term" value="F:chemorepellent activity"/>
    <property type="evidence" value="ECO:0000318"/>
    <property type="project" value="GO_Central"/>
</dbReference>
<dbReference type="GO" id="GO:0030215">
    <property type="term" value="F:semaphorin receptor binding"/>
    <property type="evidence" value="ECO:0000266"/>
    <property type="project" value="RGD"/>
</dbReference>
<dbReference type="GO" id="GO:0007411">
    <property type="term" value="P:axon guidance"/>
    <property type="evidence" value="ECO:0000250"/>
    <property type="project" value="UniProtKB"/>
</dbReference>
<dbReference type="GO" id="GO:0007417">
    <property type="term" value="P:central nervous system development"/>
    <property type="evidence" value="ECO:0000250"/>
    <property type="project" value="UniProtKB"/>
</dbReference>
<dbReference type="GO" id="GO:0021766">
    <property type="term" value="P:hippocampus development"/>
    <property type="evidence" value="ECO:0000250"/>
    <property type="project" value="UniProtKB"/>
</dbReference>
<dbReference type="GO" id="GO:0001755">
    <property type="term" value="P:neural crest cell migration"/>
    <property type="evidence" value="ECO:0000318"/>
    <property type="project" value="GO_Central"/>
</dbReference>
<dbReference type="GO" id="GO:0030335">
    <property type="term" value="P:positive regulation of cell migration"/>
    <property type="evidence" value="ECO:0000318"/>
    <property type="project" value="GO_Central"/>
</dbReference>
<dbReference type="GO" id="GO:0071526">
    <property type="term" value="P:semaphorin-plexin signaling pathway"/>
    <property type="evidence" value="ECO:0000318"/>
    <property type="project" value="GO_Central"/>
</dbReference>
<dbReference type="CDD" id="cd11267">
    <property type="entry name" value="Sema_6B"/>
    <property type="match status" value="1"/>
</dbReference>
<dbReference type="FunFam" id="3.30.1680.10:FF:000009">
    <property type="entry name" value="Semaphorin 6B isoform 3 variant"/>
    <property type="match status" value="1"/>
</dbReference>
<dbReference type="FunFam" id="2.130.10.10:FF:000028">
    <property type="entry name" value="semaphorin-6A isoform X1"/>
    <property type="match status" value="1"/>
</dbReference>
<dbReference type="Gene3D" id="3.30.1680.10">
    <property type="entry name" value="ligand-binding face of the semaphorins, domain 2"/>
    <property type="match status" value="1"/>
</dbReference>
<dbReference type="Gene3D" id="2.130.10.10">
    <property type="entry name" value="YVTN repeat-like/Quinoprotein amine dehydrogenase"/>
    <property type="match status" value="1"/>
</dbReference>
<dbReference type="InterPro" id="IPR002165">
    <property type="entry name" value="Plexin_repeat"/>
</dbReference>
<dbReference type="InterPro" id="IPR001627">
    <property type="entry name" value="Semap_dom"/>
</dbReference>
<dbReference type="InterPro" id="IPR036352">
    <property type="entry name" value="Semap_dom_sf"/>
</dbReference>
<dbReference type="InterPro" id="IPR027231">
    <property type="entry name" value="Semaphorin"/>
</dbReference>
<dbReference type="InterPro" id="IPR015943">
    <property type="entry name" value="WD40/YVTN_repeat-like_dom_sf"/>
</dbReference>
<dbReference type="PANTHER" id="PTHR11036">
    <property type="entry name" value="SEMAPHORIN"/>
    <property type="match status" value="1"/>
</dbReference>
<dbReference type="PANTHER" id="PTHR11036:SF10">
    <property type="entry name" value="SEMAPHORIN-6B"/>
    <property type="match status" value="1"/>
</dbReference>
<dbReference type="Pfam" id="PF01437">
    <property type="entry name" value="PSI"/>
    <property type="match status" value="1"/>
</dbReference>
<dbReference type="Pfam" id="PF01403">
    <property type="entry name" value="Sema"/>
    <property type="match status" value="1"/>
</dbReference>
<dbReference type="SMART" id="SM00630">
    <property type="entry name" value="Sema"/>
    <property type="match status" value="1"/>
</dbReference>
<dbReference type="SUPFAM" id="SSF103575">
    <property type="entry name" value="Plexin repeat"/>
    <property type="match status" value="1"/>
</dbReference>
<dbReference type="SUPFAM" id="SSF101912">
    <property type="entry name" value="Sema domain"/>
    <property type="match status" value="1"/>
</dbReference>
<dbReference type="PROSITE" id="PS51004">
    <property type="entry name" value="SEMA"/>
    <property type="match status" value="1"/>
</dbReference>
<protein>
    <recommendedName>
        <fullName>Semaphorin-6B</fullName>
    </recommendedName>
    <alternativeName>
        <fullName>Semaphorin-Z</fullName>
        <shortName>Sema Z</shortName>
    </alternativeName>
</protein>
<comment type="function">
    <text evidence="1">Functions as a cell surface repellent for mossy fibers of developing neurons in the hippocampus where it plays a role in axon guidance. May function through the PLXNA4 receptor expressed by mossy cell axons.</text>
</comment>
<comment type="subcellular location">
    <subcellularLocation>
        <location evidence="2">Cell membrane</location>
        <topology evidence="3">Single-pass type I membrane protein</topology>
    </subcellularLocation>
</comment>
<comment type="developmental stage">
    <text evidence="6">Detected in the first branchial arch of embryonic day 11 (11 dpc) embryo, and subsequently in the myotomes and the dorsal root ganglia in developing somites from 11.5 dpc through 13.5 dpc, but not in the brain. However, at 15 dpc, 18, dpc, 21 dpc and P0, highly expressed in the brain.</text>
</comment>
<comment type="similarity">
    <text evidence="7">Belongs to the semaphorin family.</text>
</comment>
<gene>
    <name type="primary">Sema6b</name>
</gene>
<organism>
    <name type="scientific">Rattus norvegicus</name>
    <name type="common">Rat</name>
    <dbReference type="NCBI Taxonomy" id="10116"/>
    <lineage>
        <taxon>Eukaryota</taxon>
        <taxon>Metazoa</taxon>
        <taxon>Chordata</taxon>
        <taxon>Craniata</taxon>
        <taxon>Vertebrata</taxon>
        <taxon>Euteleostomi</taxon>
        <taxon>Mammalia</taxon>
        <taxon>Eutheria</taxon>
        <taxon>Euarchontoglires</taxon>
        <taxon>Glires</taxon>
        <taxon>Rodentia</taxon>
        <taxon>Myomorpha</taxon>
        <taxon>Muroidea</taxon>
        <taxon>Muridae</taxon>
        <taxon>Murinae</taxon>
        <taxon>Rattus</taxon>
    </lineage>
</organism>
<evidence type="ECO:0000250" key="1">
    <source>
        <dbReference type="UniProtKB" id="O54951"/>
    </source>
</evidence>
<evidence type="ECO:0000250" key="2">
    <source>
        <dbReference type="UniProtKB" id="Q9H3T3"/>
    </source>
</evidence>
<evidence type="ECO:0000255" key="3"/>
<evidence type="ECO:0000255" key="4">
    <source>
        <dbReference type="PROSITE-ProRule" id="PRU00352"/>
    </source>
</evidence>
<evidence type="ECO:0000256" key="5">
    <source>
        <dbReference type="SAM" id="MobiDB-lite"/>
    </source>
</evidence>
<evidence type="ECO:0000269" key="6">
    <source>
    </source>
</evidence>
<evidence type="ECO:0000305" key="7"/>
<reference key="1">
    <citation type="journal article" date="1997" name="Brain Res. Mol. Brain Res.">
        <title>Molecular cloning of a novel member of semaphorin family genes, semaphorin Z.</title>
        <authorList>
            <person name="Kikuchi K."/>
            <person name="Ishida H."/>
            <person name="Kimura T."/>
        </authorList>
    </citation>
    <scope>NUCLEOTIDE SEQUENCE [MRNA]</scope>
    <scope>DEVELOPMENTAL STAGE</scope>
    <source>
        <strain>Wistar</strain>
        <tissue>Brain</tissue>
    </source>
</reference>
<name>SEM6B_RAT</name>
<proteinExistence type="evidence at transcript level"/>
<sequence>MWTPRAPPPRPALLFLLLLLLRVTHGLFPDEPPPLSVAPRDYLSHYPVFVGSGPGRLTPAEGAEDLNIQRVLRVNRTLFIGDRDNLYQVELEPSTSTELRYQRKLTWRSNPSDIDVCRMKGKQEGECRNFVKVLLLRDESTLFVCGSNAFNPICANYSMDTLQLLGDNISGMARCPYDPKHANVALFSDGMLFTATVTDFLAIDAVIYRSLGDRPTLRTVKHDSKWFKEPYFVHAVEWGSHVYFFFREIAMEFNYLEKVVVSRVARVCKNDVGGSPRVLEKQWTSFLKARLNCSVPGDSHFYFNVLQAVTGVVSLGGRPVILAVFSTPSNSIPGSAVCAFDMNQVAAVFEGRFREQKSPESIWTPVPEDQVPRPRPGCCAAPGMQYNASNALPDEILNFVKTHPLMDEAVPSLGHSPWIVRTLIRHQLTRVAVDVGAGPWGNQTIVFLGSEVGTVLKFLVKPNASVSGTTGPSIFLEEFETYRPDRCGRSSSAGEWGQRLLSLELDAASGGLLAAFPRCVVRVPVARCQLYSGCMKNCIGSQDPYCGWAPDGSCIFLRPGTSATFEQDVSGASTSGLGDCTGLLRASLSDDRAGLVSVNLLVTSSVAAFVVGAVVSGFSVGWFVGLRERRELARRKDKEAILAHGGSEAVLSVSRLGERRGTGTGGRGGAGGGPGGPPEALLAPLMQNGWTKAALLHGGPHDLDSGLLPTPEQTPLPQKRLPTTHPHAHALGPRAWDHSHALLSASASTSLLLLAHTRAPEQPPVPTESGPESRLCAPRSCRASHPGDFPLTPHASPDRRRVVSAPTGPLDSSSVGDDLPGPWSPPATSSLRRPGPHGPPTAALRRTHTFNSGEARPGGHRPRRHAPADSTHLLPCGTGERTAPPVP</sequence>
<keyword id="KW-1003">Cell membrane</keyword>
<keyword id="KW-0217">Developmental protein</keyword>
<keyword id="KW-0221">Differentiation</keyword>
<keyword id="KW-1015">Disulfide bond</keyword>
<keyword id="KW-0325">Glycoprotein</keyword>
<keyword id="KW-0472">Membrane</keyword>
<keyword id="KW-0488">Methylation</keyword>
<keyword id="KW-0524">Neurogenesis</keyword>
<keyword id="KW-1185">Reference proteome</keyword>
<keyword id="KW-0732">Signal</keyword>
<keyword id="KW-0812">Transmembrane</keyword>
<keyword id="KW-1133">Transmembrane helix</keyword>